<proteinExistence type="evidence at transcript level"/>
<accession>P31628</accession>
<dbReference type="EMBL" id="M63105">
    <property type="protein sequence ID" value="AAA42893.1"/>
    <property type="molecule type" value="mRNA"/>
</dbReference>
<dbReference type="PIR" id="A40479">
    <property type="entry name" value="VKLJCE"/>
</dbReference>
<dbReference type="SMR" id="P31628"/>
<dbReference type="GO" id="GO:0030430">
    <property type="term" value="C:host cell cytoplasm"/>
    <property type="evidence" value="ECO:0007669"/>
    <property type="project" value="UniProtKB-SubCell"/>
</dbReference>
<dbReference type="GO" id="GO:0044196">
    <property type="term" value="C:host cell nucleolus"/>
    <property type="evidence" value="ECO:0007669"/>
    <property type="project" value="UniProtKB-SubCell"/>
</dbReference>
<dbReference type="GO" id="GO:0003723">
    <property type="term" value="F:RNA binding"/>
    <property type="evidence" value="ECO:0007669"/>
    <property type="project" value="UniProtKB-KW"/>
</dbReference>
<dbReference type="GO" id="GO:0051028">
    <property type="term" value="P:mRNA transport"/>
    <property type="evidence" value="ECO:0007669"/>
    <property type="project" value="UniProtKB-KW"/>
</dbReference>
<name>REV_CAEV</name>
<feature type="chain" id="PRO_0000085474" description="Protein Rev">
    <location>
        <begin position="1"/>
        <end position="133"/>
    </location>
</feature>
<feature type="region of interest" description="RNA-binding (RRE)" evidence="1">
    <location>
        <begin position="13"/>
        <end position="27"/>
    </location>
</feature>
<feature type="region of interest" description="Disordered" evidence="2">
    <location>
        <begin position="42"/>
        <end position="65"/>
    </location>
</feature>
<feature type="region of interest" description="Disordered" evidence="2">
    <location>
        <begin position="103"/>
        <end position="133"/>
    </location>
</feature>
<feature type="short sequence motif" description="Nuclear localization signal and RNA-binding (RRE)" evidence="1">
    <location>
        <begin position="59"/>
        <end position="82"/>
    </location>
</feature>
<feature type="short sequence motif" description="Nuclear export signal" evidence="1">
    <location>
        <begin position="89"/>
        <end position="102"/>
    </location>
</feature>
<feature type="compositionally biased region" description="Basic residues" evidence="2">
    <location>
        <begin position="51"/>
        <end position="64"/>
    </location>
</feature>
<comment type="function">
    <text evidence="1">Escorts unspliced or incompletely spliced viral pre-mRNAs (late transcripts) out of the nucleus of infected cells. These pre-mRNAs carry a recognition sequence called Rev responsive element (RRE) located in the env gene, that is not present in fully spliced viral mRNAs (early transcripts). This function is essential since most viral proteins are translated from unspliced or partially spliced pre-mRNAs which cannot exit the nucleus by the pathway used by fully processed cellular mRNAs (By similarity).</text>
</comment>
<comment type="subunit">
    <text evidence="1">Homomultimer; when bound to the RRE. Multimeric assembly is essential for activity (By similarity).</text>
</comment>
<comment type="subcellular location">
    <subcellularLocation>
        <location evidence="1">Host nucleus</location>
        <location evidence="1">Host nucleolus</location>
    </subcellularLocation>
    <subcellularLocation>
        <location evidence="1">Host cytoplasm</location>
    </subcellularLocation>
    <text evidence="1">The presence of both nuclear import and nuclear export signals leads to continuous shuttling between the nucleus and cytoplasm.</text>
</comment>
<comment type="domain">
    <text evidence="1">The RNA-binding motif binds to the RRE present in incompletely spliced viral pre-mRNAs. This region also contains the NLS which mediates nuclear localization. These overlapping functions prevent Rev bound to RRE from undesirable return to the nucleus. When Rev binds the RRE, the NLS becomes masked while the NES remains accessible (By similarity).</text>
</comment>
<organismHost>
    <name type="scientific">Capra hircus</name>
    <name type="common">Goat</name>
    <dbReference type="NCBI Taxonomy" id="9925"/>
</organismHost>
<reference key="1">
    <citation type="journal article" date="1991" name="Virology">
        <title>rev-like transcripts of caprine arthritis encephalitis virus.</title>
        <authorList>
            <person name="Kalinski H."/>
            <person name="Yaniv A."/>
            <person name="Mashiah P."/>
            <person name="Miki T."/>
            <person name="Tronick S.R."/>
            <person name="Gazit A."/>
        </authorList>
    </citation>
    <scope>NUCLEOTIDE SEQUENCE [MRNA]</scope>
</reference>
<keyword id="KW-1035">Host cytoplasm</keyword>
<keyword id="KW-1048">Host nucleus</keyword>
<keyword id="KW-0509">mRNA transport</keyword>
<keyword id="KW-0694">RNA-binding</keyword>
<keyword id="KW-0813">Transport</keyword>
<evidence type="ECO:0000250" key="1"/>
<evidence type="ECO:0000256" key="2">
    <source>
        <dbReference type="SAM" id="MobiDB-lite"/>
    </source>
</evidence>
<gene>
    <name type="primary">rev</name>
</gene>
<organism>
    <name type="scientific">Caprine arthritis encephalitis virus</name>
    <name type="common">CAEV</name>
    <dbReference type="NCBI Taxonomy" id="11660"/>
    <lineage>
        <taxon>Viruses</taxon>
        <taxon>Riboviria</taxon>
        <taxon>Pararnavirae</taxon>
        <taxon>Artverviricota</taxon>
        <taxon>Revtraviricetes</taxon>
        <taxon>Ortervirales</taxon>
        <taxon>Retroviridae</taxon>
        <taxon>Orthoretrovirinae</taxon>
        <taxon>Lentivirus</taxon>
    </lineage>
</organism>
<protein>
    <recommendedName>
        <fullName>Protein Rev</fullName>
    </recommendedName>
    <alternativeName>
        <fullName>Rev-C</fullName>
    </alternativeName>
</protein>
<sequence>MDAGARQIRFTGEKNWMEVTMEEEEKGKRKGCIERQQDIQDLKYPNLPAGHSHHGNKSRRRRRQSGFWRWLRGIRRQRDKPKGDSEKGLGSCVGALAELTLEEAMAEEPADAASPTADDGHLDKWTAWRLPQK</sequence>